<organism>
    <name type="scientific">Streptosporangium roseum (strain ATCC 12428 / DSM 43021 / JCM 3005 / KCTC 9067 / NCIMB 10171 / NRRL 2505 / NI 9100)</name>
    <dbReference type="NCBI Taxonomy" id="479432"/>
    <lineage>
        <taxon>Bacteria</taxon>
        <taxon>Bacillati</taxon>
        <taxon>Actinomycetota</taxon>
        <taxon>Actinomycetes</taxon>
        <taxon>Streptosporangiales</taxon>
        <taxon>Streptosporangiaceae</taxon>
        <taxon>Streptosporangium</taxon>
    </lineage>
</organism>
<reference key="1">
    <citation type="journal article" date="2010" name="Stand. Genomic Sci.">
        <title>Complete genome sequence of Streptosporangium roseum type strain (NI 9100).</title>
        <authorList>
            <person name="Nolan M."/>
            <person name="Sikorski J."/>
            <person name="Jando M."/>
            <person name="Lucas S."/>
            <person name="Lapidus A."/>
            <person name="Glavina Del Rio T."/>
            <person name="Chen F."/>
            <person name="Tice H."/>
            <person name="Pitluck S."/>
            <person name="Cheng J.F."/>
            <person name="Chertkov O."/>
            <person name="Sims D."/>
            <person name="Meincke L."/>
            <person name="Brettin T."/>
            <person name="Han C."/>
            <person name="Detter J.C."/>
            <person name="Bruce D."/>
            <person name="Goodwin L."/>
            <person name="Land M."/>
            <person name="Hauser L."/>
            <person name="Chang Y.J."/>
            <person name="Jeffries C.D."/>
            <person name="Ivanova N."/>
            <person name="Mavromatis K."/>
            <person name="Mikhailova N."/>
            <person name="Chen A."/>
            <person name="Palaniappan K."/>
            <person name="Chain P."/>
            <person name="Rohde M."/>
            <person name="Goker M."/>
            <person name="Bristow J."/>
            <person name="Eisen J.A."/>
            <person name="Markowitz V."/>
            <person name="Hugenholtz P."/>
            <person name="Kyrpides N.C."/>
            <person name="Klenk H.P."/>
        </authorList>
    </citation>
    <scope>NUCLEOTIDE SEQUENCE [LARGE SCALE GENOMIC DNA]</scope>
    <source>
        <strain>ATCC 12428 / DSM 43021 / JCM 3005 / KCTC 9067 / NCIMB 10171 / NRRL 2505 / NI 9100</strain>
    </source>
</reference>
<evidence type="ECO:0000255" key="1">
    <source>
        <dbReference type="HAMAP-Rule" id="MF_02114"/>
    </source>
</evidence>
<name>FBID_STRRD</name>
<proteinExistence type="inferred from homology"/>
<protein>
    <recommendedName>
        <fullName evidence="1">Phosphoenolpyruvate guanylyltransferase</fullName>
        <shortName evidence="1">PEP guanylyltransferase</shortName>
        <ecNumber evidence="1">2.7.7.105</ecNumber>
    </recommendedName>
</protein>
<accession>D2AVM1</accession>
<feature type="chain" id="PRO_0000398718" description="Phosphoenolpyruvate guanylyltransferase">
    <location>
        <begin position="1"/>
        <end position="222"/>
    </location>
</feature>
<feature type="binding site" evidence="1">
    <location>
        <position position="147"/>
    </location>
    <ligand>
        <name>phosphoenolpyruvate</name>
        <dbReference type="ChEBI" id="CHEBI:58702"/>
    </ligand>
</feature>
<feature type="binding site" evidence="1">
    <location>
        <position position="163"/>
    </location>
    <ligand>
        <name>phosphoenolpyruvate</name>
        <dbReference type="ChEBI" id="CHEBI:58702"/>
    </ligand>
</feature>
<feature type="binding site" evidence="1">
    <location>
        <position position="166"/>
    </location>
    <ligand>
        <name>phosphoenolpyruvate</name>
        <dbReference type="ChEBI" id="CHEBI:58702"/>
    </ligand>
</feature>
<dbReference type="EC" id="2.7.7.105" evidence="1"/>
<dbReference type="EMBL" id="CP001814">
    <property type="protein sequence ID" value="ACZ90667.1"/>
    <property type="molecule type" value="Genomic_DNA"/>
</dbReference>
<dbReference type="RefSeq" id="WP_012894397.1">
    <property type="nucleotide sequence ID" value="NC_013595.1"/>
</dbReference>
<dbReference type="SMR" id="D2AVM1"/>
<dbReference type="STRING" id="479432.Sros_8012"/>
<dbReference type="KEGG" id="sro:Sros_8012"/>
<dbReference type="eggNOG" id="COG1920">
    <property type="taxonomic scope" value="Bacteria"/>
</dbReference>
<dbReference type="HOGENOM" id="CLU_076569_0_0_11"/>
<dbReference type="OrthoDB" id="9151145at2"/>
<dbReference type="UniPathway" id="UPA00071"/>
<dbReference type="Proteomes" id="UP000002029">
    <property type="component" value="Chromosome"/>
</dbReference>
<dbReference type="GO" id="GO:0005525">
    <property type="term" value="F:GTP binding"/>
    <property type="evidence" value="ECO:0007669"/>
    <property type="project" value="UniProtKB-KW"/>
</dbReference>
<dbReference type="GO" id="GO:0043814">
    <property type="term" value="F:phospholactate guanylyltransferase activity"/>
    <property type="evidence" value="ECO:0007669"/>
    <property type="project" value="InterPro"/>
</dbReference>
<dbReference type="GO" id="GO:0052645">
    <property type="term" value="P:F420-0 metabolic process"/>
    <property type="evidence" value="ECO:0007669"/>
    <property type="project" value="UniProtKB-UniRule"/>
</dbReference>
<dbReference type="Gene3D" id="3.90.550.10">
    <property type="entry name" value="Spore Coat Polysaccharide Biosynthesis Protein SpsA, Chain A"/>
    <property type="match status" value="1"/>
</dbReference>
<dbReference type="HAMAP" id="MF_02114">
    <property type="entry name" value="CofC"/>
    <property type="match status" value="1"/>
</dbReference>
<dbReference type="InterPro" id="IPR002835">
    <property type="entry name" value="CofC"/>
</dbReference>
<dbReference type="InterPro" id="IPR029044">
    <property type="entry name" value="Nucleotide-diphossugar_trans"/>
</dbReference>
<dbReference type="NCBIfam" id="TIGR03552">
    <property type="entry name" value="F420_cofC"/>
    <property type="match status" value="1"/>
</dbReference>
<dbReference type="PANTHER" id="PTHR40392">
    <property type="entry name" value="2-PHOSPHO-L-LACTATE GUANYLYLTRANSFERASE"/>
    <property type="match status" value="1"/>
</dbReference>
<dbReference type="PANTHER" id="PTHR40392:SF1">
    <property type="entry name" value="2-PHOSPHO-L-LACTATE GUANYLYLTRANSFERASE"/>
    <property type="match status" value="1"/>
</dbReference>
<dbReference type="Pfam" id="PF01983">
    <property type="entry name" value="CofC"/>
    <property type="match status" value="1"/>
</dbReference>
<dbReference type="SUPFAM" id="SSF53448">
    <property type="entry name" value="Nucleotide-diphospho-sugar transferases"/>
    <property type="match status" value="1"/>
</dbReference>
<comment type="function">
    <text evidence="1">Guanylyltransferase that catalyzes the activation of phosphoenolpyruvate (PEP) as enolpyruvoyl-2-diphospho-5'-guanosine, via the condensation of PEP with GTP. It is involved in the biosynthesis of coenzyme F420, a hydride carrier cofactor.</text>
</comment>
<comment type="catalytic activity">
    <reaction evidence="1">
        <text>phosphoenolpyruvate + GTP + H(+) = enolpyruvoyl-2-diphospho-5'-guanosine + diphosphate</text>
        <dbReference type="Rhea" id="RHEA:30519"/>
        <dbReference type="ChEBI" id="CHEBI:15378"/>
        <dbReference type="ChEBI" id="CHEBI:33019"/>
        <dbReference type="ChEBI" id="CHEBI:37565"/>
        <dbReference type="ChEBI" id="CHEBI:58702"/>
        <dbReference type="ChEBI" id="CHEBI:143701"/>
        <dbReference type="EC" id="2.7.7.105"/>
    </reaction>
</comment>
<comment type="pathway">
    <text evidence="1">Cofactor biosynthesis; coenzyme F420 biosynthesis.</text>
</comment>
<comment type="similarity">
    <text evidence="1">Belongs to the CofC family.</text>
</comment>
<gene>
    <name evidence="1" type="primary">fbiD</name>
    <name type="ordered locus">Sros_8012</name>
</gene>
<sequence>MLKAMPASESSGWTLVVPVKTLVAAKTRLSEAAGPHRAALAVAIACDTVEAALSCVIVARIVVVTGDPLAAEALGGVGAHVVGDPEAGLNAALRRGAQEAVRLAPGDAVGALQADLPALRPAELALVLTAAAEFEQAFLPDAADVGTTFYGVRPGVPFTPGFGGESRDRHLRRGAKEICLDGIDSVRRDVDTPDDLRAALALGLGPRTLAMVERIRGGFPSP</sequence>
<keyword id="KW-0342">GTP-binding</keyword>
<keyword id="KW-0547">Nucleotide-binding</keyword>
<keyword id="KW-0548">Nucleotidyltransferase</keyword>
<keyword id="KW-1185">Reference proteome</keyword>
<keyword id="KW-0808">Transferase</keyword>